<accession>A6VLJ2</accession>
<comment type="function">
    <text evidence="1">Protein S19 forms a complex with S13 that binds strongly to the 16S ribosomal RNA.</text>
</comment>
<comment type="similarity">
    <text evidence="1">Belongs to the universal ribosomal protein uS19 family.</text>
</comment>
<evidence type="ECO:0000255" key="1">
    <source>
        <dbReference type="HAMAP-Rule" id="MF_00531"/>
    </source>
</evidence>
<evidence type="ECO:0000305" key="2"/>
<dbReference type="EMBL" id="CP000746">
    <property type="protein sequence ID" value="ABR73839.1"/>
    <property type="molecule type" value="Genomic_DNA"/>
</dbReference>
<dbReference type="RefSeq" id="WP_005539416.1">
    <property type="nucleotide sequence ID" value="NC_009655.1"/>
</dbReference>
<dbReference type="SMR" id="A6VLJ2"/>
<dbReference type="STRING" id="339671.Asuc_0463"/>
<dbReference type="GeneID" id="93298793"/>
<dbReference type="KEGG" id="asu:Asuc_0463"/>
<dbReference type="eggNOG" id="COG0185">
    <property type="taxonomic scope" value="Bacteria"/>
</dbReference>
<dbReference type="HOGENOM" id="CLU_144911_0_1_6"/>
<dbReference type="OrthoDB" id="9797833at2"/>
<dbReference type="Proteomes" id="UP000001114">
    <property type="component" value="Chromosome"/>
</dbReference>
<dbReference type="GO" id="GO:0005737">
    <property type="term" value="C:cytoplasm"/>
    <property type="evidence" value="ECO:0007669"/>
    <property type="project" value="UniProtKB-ARBA"/>
</dbReference>
<dbReference type="GO" id="GO:0015935">
    <property type="term" value="C:small ribosomal subunit"/>
    <property type="evidence" value="ECO:0007669"/>
    <property type="project" value="InterPro"/>
</dbReference>
<dbReference type="GO" id="GO:0019843">
    <property type="term" value="F:rRNA binding"/>
    <property type="evidence" value="ECO:0007669"/>
    <property type="project" value="UniProtKB-UniRule"/>
</dbReference>
<dbReference type="GO" id="GO:0003735">
    <property type="term" value="F:structural constituent of ribosome"/>
    <property type="evidence" value="ECO:0007669"/>
    <property type="project" value="InterPro"/>
</dbReference>
<dbReference type="GO" id="GO:0000028">
    <property type="term" value="P:ribosomal small subunit assembly"/>
    <property type="evidence" value="ECO:0007669"/>
    <property type="project" value="TreeGrafter"/>
</dbReference>
<dbReference type="GO" id="GO:0006412">
    <property type="term" value="P:translation"/>
    <property type="evidence" value="ECO:0007669"/>
    <property type="project" value="UniProtKB-UniRule"/>
</dbReference>
<dbReference type="FunFam" id="3.30.860.10:FF:000001">
    <property type="entry name" value="30S ribosomal protein S19"/>
    <property type="match status" value="1"/>
</dbReference>
<dbReference type="Gene3D" id="3.30.860.10">
    <property type="entry name" value="30s Ribosomal Protein S19, Chain A"/>
    <property type="match status" value="1"/>
</dbReference>
<dbReference type="HAMAP" id="MF_00531">
    <property type="entry name" value="Ribosomal_uS19"/>
    <property type="match status" value="1"/>
</dbReference>
<dbReference type="InterPro" id="IPR002222">
    <property type="entry name" value="Ribosomal_uS19"/>
</dbReference>
<dbReference type="InterPro" id="IPR005732">
    <property type="entry name" value="Ribosomal_uS19_bac-type"/>
</dbReference>
<dbReference type="InterPro" id="IPR020934">
    <property type="entry name" value="Ribosomal_uS19_CS"/>
</dbReference>
<dbReference type="InterPro" id="IPR023575">
    <property type="entry name" value="Ribosomal_uS19_SF"/>
</dbReference>
<dbReference type="NCBIfam" id="TIGR01050">
    <property type="entry name" value="rpsS_bact"/>
    <property type="match status" value="1"/>
</dbReference>
<dbReference type="PANTHER" id="PTHR11880">
    <property type="entry name" value="RIBOSOMAL PROTEIN S19P FAMILY MEMBER"/>
    <property type="match status" value="1"/>
</dbReference>
<dbReference type="PANTHER" id="PTHR11880:SF8">
    <property type="entry name" value="SMALL RIBOSOMAL SUBUNIT PROTEIN US19M"/>
    <property type="match status" value="1"/>
</dbReference>
<dbReference type="Pfam" id="PF00203">
    <property type="entry name" value="Ribosomal_S19"/>
    <property type="match status" value="1"/>
</dbReference>
<dbReference type="PIRSF" id="PIRSF002144">
    <property type="entry name" value="Ribosomal_S19"/>
    <property type="match status" value="1"/>
</dbReference>
<dbReference type="PRINTS" id="PR00975">
    <property type="entry name" value="RIBOSOMALS19"/>
</dbReference>
<dbReference type="SUPFAM" id="SSF54570">
    <property type="entry name" value="Ribosomal protein S19"/>
    <property type="match status" value="1"/>
</dbReference>
<dbReference type="PROSITE" id="PS00323">
    <property type="entry name" value="RIBOSOMAL_S19"/>
    <property type="match status" value="1"/>
</dbReference>
<keyword id="KW-1185">Reference proteome</keyword>
<keyword id="KW-0687">Ribonucleoprotein</keyword>
<keyword id="KW-0689">Ribosomal protein</keyword>
<keyword id="KW-0694">RNA-binding</keyword>
<keyword id="KW-0699">rRNA-binding</keyword>
<organism>
    <name type="scientific">Actinobacillus succinogenes (strain ATCC 55618 / DSM 22257 / CCUG 43843 / 130Z)</name>
    <dbReference type="NCBI Taxonomy" id="339671"/>
    <lineage>
        <taxon>Bacteria</taxon>
        <taxon>Pseudomonadati</taxon>
        <taxon>Pseudomonadota</taxon>
        <taxon>Gammaproteobacteria</taxon>
        <taxon>Pasteurellales</taxon>
        <taxon>Pasteurellaceae</taxon>
        <taxon>Actinobacillus</taxon>
    </lineage>
</organism>
<gene>
    <name evidence="1" type="primary">rpsS</name>
    <name type="ordered locus">Asuc_0463</name>
</gene>
<feature type="chain" id="PRO_1000072504" description="Small ribosomal subunit protein uS19">
    <location>
        <begin position="1"/>
        <end position="91"/>
    </location>
</feature>
<reference key="1">
    <citation type="journal article" date="2010" name="BMC Genomics">
        <title>A genomic perspective on the potential of Actinobacillus succinogenes for industrial succinate production.</title>
        <authorList>
            <person name="McKinlay J.B."/>
            <person name="Laivenieks M."/>
            <person name="Schindler B.D."/>
            <person name="McKinlay A.A."/>
            <person name="Siddaramappa S."/>
            <person name="Challacombe J.F."/>
            <person name="Lowry S.R."/>
            <person name="Clum A."/>
            <person name="Lapidus A.L."/>
            <person name="Burkhart K.B."/>
            <person name="Harkins V."/>
            <person name="Vieille C."/>
        </authorList>
    </citation>
    <scope>NUCLEOTIDE SEQUENCE [LARGE SCALE GENOMIC DNA]</scope>
    <source>
        <strain>ATCC 55618 / DSM 22257 / CCUG 43843 / 130Z</strain>
    </source>
</reference>
<proteinExistence type="inferred from homology"/>
<sequence length="91" mass="10259">MPRSLKKGPFLDLHLLKKVEKAVESGDKKPIKTWSRRSMIIPSMIGLTIAVHNGRQHVPVYVSDEMIGHKLGEFAPTRTYRGHAADKKAKK</sequence>
<name>RS19_ACTSZ</name>
<protein>
    <recommendedName>
        <fullName evidence="1">Small ribosomal subunit protein uS19</fullName>
    </recommendedName>
    <alternativeName>
        <fullName evidence="2">30S ribosomal protein S19</fullName>
    </alternativeName>
</protein>